<accession>Q95ND2</accession>
<evidence type="ECO:0000250" key="1">
    <source>
        <dbReference type="UniProtKB" id="P51681"/>
    </source>
</evidence>
<evidence type="ECO:0000250" key="2">
    <source>
        <dbReference type="UniProtKB" id="Q9XT76"/>
    </source>
</evidence>
<evidence type="ECO:0000255" key="3"/>
<evidence type="ECO:0000255" key="4">
    <source>
        <dbReference type="PROSITE-ProRule" id="PRU00521"/>
    </source>
</evidence>
<organism>
    <name type="scientific">Mandrillus leucophaeus</name>
    <name type="common">Drill</name>
    <name type="synonym">Papio leucophaeus</name>
    <dbReference type="NCBI Taxonomy" id="9568"/>
    <lineage>
        <taxon>Eukaryota</taxon>
        <taxon>Metazoa</taxon>
        <taxon>Chordata</taxon>
        <taxon>Craniata</taxon>
        <taxon>Vertebrata</taxon>
        <taxon>Euteleostomi</taxon>
        <taxon>Mammalia</taxon>
        <taxon>Eutheria</taxon>
        <taxon>Euarchontoglires</taxon>
        <taxon>Primates</taxon>
        <taxon>Haplorrhini</taxon>
        <taxon>Catarrhini</taxon>
        <taxon>Cercopithecidae</taxon>
        <taxon>Cercopithecinae</taxon>
        <taxon>Mandrillus</taxon>
    </lineage>
</organism>
<protein>
    <recommendedName>
        <fullName>C-C chemokine receptor type 5</fullName>
        <shortName>C-C CKR-5</shortName>
        <shortName>CC-CKR-5</shortName>
        <shortName>CCR-5</shortName>
        <shortName>CCR5</shortName>
    </recommendedName>
    <cdAntigenName>CD195</cdAntigenName>
</protein>
<comment type="function">
    <text evidence="1">Receptor for a number of inflammatory CC-chemokines including CCL3/MIP-1-alpha, CCL4/MIP-1-beta and RANTES and subsequently transduces a signal by increasing the intracellular calcium ion level. May play a role in the control of granulocytic lineage proliferation or differentiation. Participates in T-lymphocyte migration to the infection site by acting as a chemotactic receptor.</text>
</comment>
<comment type="subunit">
    <text evidence="1">Interacts with PRAF2. Efficient ligand binding to CCL3/MIP-1alpha and CCL4/MIP-1beta requires sulfation, O-glycosylation and sialic acid modifications. Glycosylation on Ser-6 is required for efficient binding of CCL4. Interacts with GRK2. Interacts with ARRB1 and ARRB2. Interacts with CNIH4. Interacts with S100A4; this interaction stimulates T-lymphocyte chemotaxis.</text>
</comment>
<comment type="subcellular location">
    <subcellularLocation>
        <location evidence="2">Cell membrane</location>
        <topology evidence="2">Multi-pass membrane protein</topology>
    </subcellularLocation>
</comment>
<comment type="PTM">
    <text evidence="1">Sulfated on at least 2 of the N-terminal tyrosines. Sulfation is required for efficient binding of the chemokines, CCL3 and CCL4 (By similarity).</text>
</comment>
<comment type="PTM">
    <text evidence="1">Palmitoylation in the C-terminal is important for cell surface expression.</text>
</comment>
<comment type="PTM">
    <text evidence="1">Phosphorylation on serine residues in the C-terminal is stimulated by binding CC chemokines especially by APO-RANTES.</text>
</comment>
<comment type="PTM">
    <text evidence="1">O-glycosylated, but not N-glycosylated. Ser-6 appears to be the major site even if Ser-7 may be also O-glycosylated. Also sialylated glycans present which contribute to chemokine binding. Thr-16 and Ser-17 may also be glycosylated and, if so, with small moieties such as a T-antigen.</text>
</comment>
<comment type="similarity">
    <text evidence="4">Belongs to the G-protein coupled receptor 1 family.</text>
</comment>
<sequence>MDYQVSSPTYDIDYYTSEPCQKINVKQIAARLLPPLYSLVFIFGFVGNILVVLILINCKRLKSMTDIYLLNLAISDLLFLLTVPFWAHYAAAQWDFGNIMCQLLTGLYFIGFFSGIFFIILLTIDRYLAIVHAVFALKARTVTFGVVTSVITWVVAVFASLPGIIFTRSQREGLHYTCSSHFPYSQYQFWKNFRTLKIVILGLVLPLLVMVICYSGILKTLLRCRNEKKRHRAVRLIFTIMIVYFLFWAPYNIVLLLNTFQEFFGLNNCSSSNRLDQAMQVTETLGMTHCCINPIIYAFVGEKFRNYLLVFFQKHIAKRFCKCCSIFQQEAPERASSVYTRTTGEQEISVGL</sequence>
<dbReference type="EMBL" id="AF177876">
    <property type="protein sequence ID" value="AAK43359.1"/>
    <property type="molecule type" value="Genomic_DNA"/>
</dbReference>
<dbReference type="SMR" id="Q95ND2"/>
<dbReference type="STRING" id="9568.ENSMLEP00000006376"/>
<dbReference type="GlyCosmos" id="Q95ND2">
    <property type="glycosylation" value="2 sites, No reported glycans"/>
</dbReference>
<dbReference type="Proteomes" id="UP000233140">
    <property type="component" value="Unassembled WGS sequence"/>
</dbReference>
<dbReference type="GO" id="GO:0005737">
    <property type="term" value="C:cytoplasm"/>
    <property type="evidence" value="ECO:0007669"/>
    <property type="project" value="TreeGrafter"/>
</dbReference>
<dbReference type="GO" id="GO:0009897">
    <property type="term" value="C:external side of plasma membrane"/>
    <property type="evidence" value="ECO:0000250"/>
    <property type="project" value="UniProtKB"/>
</dbReference>
<dbReference type="GO" id="GO:0016493">
    <property type="term" value="F:C-C chemokine receptor activity"/>
    <property type="evidence" value="ECO:0000250"/>
    <property type="project" value="UniProtKB"/>
</dbReference>
<dbReference type="GO" id="GO:0071791">
    <property type="term" value="F:chemokine (C-C motif) ligand 5 binding"/>
    <property type="evidence" value="ECO:0007669"/>
    <property type="project" value="TreeGrafter"/>
</dbReference>
<dbReference type="GO" id="GO:0019722">
    <property type="term" value="P:calcium-mediated signaling"/>
    <property type="evidence" value="ECO:0007669"/>
    <property type="project" value="TreeGrafter"/>
</dbReference>
<dbReference type="GO" id="GO:0060326">
    <property type="term" value="P:cell chemotaxis"/>
    <property type="evidence" value="ECO:0007669"/>
    <property type="project" value="TreeGrafter"/>
</dbReference>
<dbReference type="GO" id="GO:0006955">
    <property type="term" value="P:immune response"/>
    <property type="evidence" value="ECO:0007669"/>
    <property type="project" value="InterPro"/>
</dbReference>
<dbReference type="GO" id="GO:0006954">
    <property type="term" value="P:inflammatory response"/>
    <property type="evidence" value="ECO:0007669"/>
    <property type="project" value="InterPro"/>
</dbReference>
<dbReference type="GO" id="GO:0007204">
    <property type="term" value="P:positive regulation of cytosolic calcium ion concentration"/>
    <property type="evidence" value="ECO:0007669"/>
    <property type="project" value="TreeGrafter"/>
</dbReference>
<dbReference type="CDD" id="cd15184">
    <property type="entry name" value="7tmA_CCR5_CCR2"/>
    <property type="match status" value="1"/>
</dbReference>
<dbReference type="FunFam" id="1.20.1070.10:FF:000026">
    <property type="entry name" value="C-C chemokine receptor type 5"/>
    <property type="match status" value="1"/>
</dbReference>
<dbReference type="Gene3D" id="1.20.1070.10">
    <property type="entry name" value="Rhodopsin 7-helix transmembrane proteins"/>
    <property type="match status" value="1"/>
</dbReference>
<dbReference type="InterPro" id="IPR050119">
    <property type="entry name" value="CCR1-9-like"/>
</dbReference>
<dbReference type="InterPro" id="IPR002240">
    <property type="entry name" value="Chemokine_CCR5"/>
</dbReference>
<dbReference type="InterPro" id="IPR000355">
    <property type="entry name" value="Chemokine_rcpt"/>
</dbReference>
<dbReference type="InterPro" id="IPR000276">
    <property type="entry name" value="GPCR_Rhodpsn"/>
</dbReference>
<dbReference type="InterPro" id="IPR017452">
    <property type="entry name" value="GPCR_Rhodpsn_7TM"/>
</dbReference>
<dbReference type="PANTHER" id="PTHR10489:SF686">
    <property type="entry name" value="C-C CHEMOKINE RECEPTOR TYPE 5"/>
    <property type="match status" value="1"/>
</dbReference>
<dbReference type="PANTHER" id="PTHR10489">
    <property type="entry name" value="CELL ADHESION MOLECULE"/>
    <property type="match status" value="1"/>
</dbReference>
<dbReference type="Pfam" id="PF00001">
    <property type="entry name" value="7tm_1"/>
    <property type="match status" value="1"/>
</dbReference>
<dbReference type="PRINTS" id="PR00657">
    <property type="entry name" value="CCCHEMOKINER"/>
</dbReference>
<dbReference type="PRINTS" id="PR01110">
    <property type="entry name" value="CHEMOKINER5"/>
</dbReference>
<dbReference type="PRINTS" id="PR00237">
    <property type="entry name" value="GPCRRHODOPSN"/>
</dbReference>
<dbReference type="SUPFAM" id="SSF81321">
    <property type="entry name" value="Family A G protein-coupled receptor-like"/>
    <property type="match status" value="1"/>
</dbReference>
<dbReference type="PROSITE" id="PS00237">
    <property type="entry name" value="G_PROTEIN_RECEP_F1_1"/>
    <property type="match status" value="1"/>
</dbReference>
<dbReference type="PROSITE" id="PS50262">
    <property type="entry name" value="G_PROTEIN_RECEP_F1_2"/>
    <property type="match status" value="1"/>
</dbReference>
<proteinExistence type="inferred from homology"/>
<reference key="1">
    <citation type="journal article" date="1999" name="Mol. Biol. Evol.">
        <title>Sequence evolution of the CCR5 chemokine receptor gene in primates.</title>
        <authorList>
            <person name="Zhang Y.-W."/>
            <person name="Ryder O.A."/>
            <person name="Zhang Y.-P."/>
        </authorList>
    </citation>
    <scope>NUCLEOTIDE SEQUENCE [GENOMIC DNA]</scope>
</reference>
<gene>
    <name type="primary">CCR5</name>
    <name type="synonym">CMKBR5</name>
</gene>
<keyword id="KW-1003">Cell membrane</keyword>
<keyword id="KW-1015">Disulfide bond</keyword>
<keyword id="KW-0297">G-protein coupled receptor</keyword>
<keyword id="KW-0325">Glycoprotein</keyword>
<keyword id="KW-0449">Lipoprotein</keyword>
<keyword id="KW-0472">Membrane</keyword>
<keyword id="KW-0564">Palmitate</keyword>
<keyword id="KW-0597">Phosphoprotein</keyword>
<keyword id="KW-0675">Receptor</keyword>
<keyword id="KW-1185">Reference proteome</keyword>
<keyword id="KW-0765">Sulfation</keyword>
<keyword id="KW-0807">Transducer</keyword>
<keyword id="KW-0812">Transmembrane</keyword>
<keyword id="KW-1133">Transmembrane helix</keyword>
<name>CCR5_MANLE</name>
<feature type="chain" id="PRO_0000069266" description="C-C chemokine receptor type 5">
    <location>
        <begin position="1"/>
        <end position="352"/>
    </location>
</feature>
<feature type="topological domain" description="Extracellular" evidence="3">
    <location>
        <begin position="1"/>
        <end position="30"/>
    </location>
</feature>
<feature type="transmembrane region" description="Helical; Name=1" evidence="3">
    <location>
        <begin position="31"/>
        <end position="58"/>
    </location>
</feature>
<feature type="topological domain" description="Cytoplasmic" evidence="3">
    <location>
        <begin position="59"/>
        <end position="68"/>
    </location>
</feature>
<feature type="transmembrane region" description="Helical; Name=2" evidence="3">
    <location>
        <begin position="69"/>
        <end position="89"/>
    </location>
</feature>
<feature type="topological domain" description="Extracellular" evidence="3">
    <location>
        <begin position="90"/>
        <end position="102"/>
    </location>
</feature>
<feature type="transmembrane region" description="Helical; Name=3" evidence="3">
    <location>
        <begin position="103"/>
        <end position="124"/>
    </location>
</feature>
<feature type="topological domain" description="Cytoplasmic" evidence="3">
    <location>
        <begin position="125"/>
        <end position="141"/>
    </location>
</feature>
<feature type="transmembrane region" description="Helical; Name=4" evidence="3">
    <location>
        <begin position="142"/>
        <end position="166"/>
    </location>
</feature>
<feature type="topological domain" description="Extracellular" evidence="3">
    <location>
        <begin position="167"/>
        <end position="198"/>
    </location>
</feature>
<feature type="transmembrane region" description="Helical; Name=5" evidence="3">
    <location>
        <begin position="199"/>
        <end position="218"/>
    </location>
</feature>
<feature type="topological domain" description="Cytoplasmic" evidence="3">
    <location>
        <begin position="219"/>
        <end position="235"/>
    </location>
</feature>
<feature type="transmembrane region" description="Helical; Name=6" evidence="3">
    <location>
        <begin position="236"/>
        <end position="260"/>
    </location>
</feature>
<feature type="topological domain" description="Extracellular" evidence="3">
    <location>
        <begin position="261"/>
        <end position="277"/>
    </location>
</feature>
<feature type="transmembrane region" description="Helical; Name=7" evidence="3">
    <location>
        <begin position="278"/>
        <end position="301"/>
    </location>
</feature>
<feature type="topological domain" description="Cytoplasmic" evidence="3">
    <location>
        <begin position="302"/>
        <end position="352"/>
    </location>
</feature>
<feature type="modified residue" description="Sulfotyrosine" evidence="1">
    <location>
        <position position="3"/>
    </location>
</feature>
<feature type="modified residue" description="Sulfotyrosine" evidence="3">
    <location>
        <position position="10"/>
    </location>
</feature>
<feature type="modified residue" description="Sulfotyrosine" evidence="3">
    <location>
        <position position="14"/>
    </location>
</feature>
<feature type="modified residue" description="Sulfotyrosine" evidence="3">
    <location>
        <position position="15"/>
    </location>
</feature>
<feature type="modified residue" description="Phosphoserine; by BARK1" evidence="1">
    <location>
        <position position="336"/>
    </location>
</feature>
<feature type="modified residue" description="Phosphoserine; by BARK1" evidence="1">
    <location>
        <position position="337"/>
    </location>
</feature>
<feature type="modified residue" description="Phosphoserine; by BARK1" evidence="1">
    <location>
        <position position="349"/>
    </location>
</feature>
<feature type="lipid moiety-binding region" description="S-palmitoyl cysteine" evidence="1">
    <location>
        <position position="321"/>
    </location>
</feature>
<feature type="lipid moiety-binding region" description="S-palmitoyl cysteine" evidence="1">
    <location>
        <position position="323"/>
    </location>
</feature>
<feature type="lipid moiety-binding region" description="S-palmitoyl cysteine" evidence="1">
    <location>
        <position position="324"/>
    </location>
</feature>
<feature type="glycosylation site" description="O-linked (GalNAc...) serine" evidence="1">
    <location>
        <position position="6"/>
    </location>
</feature>
<feature type="glycosylation site" description="O-linked (GalNAc...) serine" evidence="1">
    <location>
        <position position="7"/>
    </location>
</feature>
<feature type="disulfide bond" evidence="1">
    <location>
        <begin position="20"/>
        <end position="269"/>
    </location>
</feature>
<feature type="disulfide bond" evidence="4">
    <location>
        <begin position="101"/>
        <end position="178"/>
    </location>
</feature>